<name>Y1171_LIGS1</name>
<dbReference type="EMBL" id="CP000233">
    <property type="protein sequence ID" value="ABD99979.1"/>
    <property type="molecule type" value="Genomic_DNA"/>
</dbReference>
<dbReference type="RefSeq" id="YP_536062.1">
    <property type="nucleotide sequence ID" value="NC_007929.1"/>
</dbReference>
<dbReference type="SMR" id="Q1WT77"/>
<dbReference type="STRING" id="362948.LSL_1171"/>
<dbReference type="KEGG" id="lsl:LSL_1171"/>
<dbReference type="PATRIC" id="fig|362948.14.peg.1245"/>
<dbReference type="HOGENOM" id="CLU_059558_0_0_9"/>
<dbReference type="OrthoDB" id="9784461at2"/>
<dbReference type="Proteomes" id="UP000006559">
    <property type="component" value="Chromosome"/>
</dbReference>
<dbReference type="GO" id="GO:0005524">
    <property type="term" value="F:ATP binding"/>
    <property type="evidence" value="ECO:0007669"/>
    <property type="project" value="UniProtKB-UniRule"/>
</dbReference>
<dbReference type="GO" id="GO:0005525">
    <property type="term" value="F:GTP binding"/>
    <property type="evidence" value="ECO:0007669"/>
    <property type="project" value="UniProtKB-UniRule"/>
</dbReference>
<dbReference type="Gene3D" id="3.40.50.300">
    <property type="entry name" value="P-loop containing nucleotide triphosphate hydrolases"/>
    <property type="match status" value="1"/>
</dbReference>
<dbReference type="HAMAP" id="MF_00636">
    <property type="entry name" value="RapZ_like"/>
    <property type="match status" value="1"/>
</dbReference>
<dbReference type="InterPro" id="IPR027417">
    <property type="entry name" value="P-loop_NTPase"/>
</dbReference>
<dbReference type="InterPro" id="IPR005337">
    <property type="entry name" value="RapZ-like"/>
</dbReference>
<dbReference type="InterPro" id="IPR053930">
    <property type="entry name" value="RapZ-like_N"/>
</dbReference>
<dbReference type="InterPro" id="IPR053931">
    <property type="entry name" value="RapZ_C"/>
</dbReference>
<dbReference type="NCBIfam" id="NF003828">
    <property type="entry name" value="PRK05416.1"/>
    <property type="match status" value="1"/>
</dbReference>
<dbReference type="PANTHER" id="PTHR30448">
    <property type="entry name" value="RNASE ADAPTER PROTEIN RAPZ"/>
    <property type="match status" value="1"/>
</dbReference>
<dbReference type="PANTHER" id="PTHR30448:SF0">
    <property type="entry name" value="RNASE ADAPTER PROTEIN RAPZ"/>
    <property type="match status" value="1"/>
</dbReference>
<dbReference type="Pfam" id="PF22740">
    <property type="entry name" value="PapZ_C"/>
    <property type="match status" value="1"/>
</dbReference>
<dbReference type="Pfam" id="PF03668">
    <property type="entry name" value="RapZ-like_N"/>
    <property type="match status" value="1"/>
</dbReference>
<dbReference type="PIRSF" id="PIRSF005052">
    <property type="entry name" value="P-loopkin"/>
    <property type="match status" value="1"/>
</dbReference>
<dbReference type="SUPFAM" id="SSF52540">
    <property type="entry name" value="P-loop containing nucleoside triphosphate hydrolases"/>
    <property type="match status" value="1"/>
</dbReference>
<evidence type="ECO:0000255" key="1">
    <source>
        <dbReference type="HAMAP-Rule" id="MF_00636"/>
    </source>
</evidence>
<comment type="function">
    <text evidence="1">Displays ATPase and GTPase activities.</text>
</comment>
<comment type="similarity">
    <text evidence="1">Belongs to the RapZ-like family.</text>
</comment>
<gene>
    <name type="ordered locus">LSL_1171</name>
</gene>
<protein>
    <recommendedName>
        <fullName evidence="1">Nucleotide-binding protein LSL_1171</fullName>
    </recommendedName>
</protein>
<sequence>MFMSALQLVIVTGMSGAGKTVAVQSFEDLGYFCVDNMPPKLLPKFYELVKESGKITKIALVVDLRSRAFYDEIVEMVRELDENEFNSSRILFLDASDEELVARYKETRRSHPLAMEGRILDGIHLERELLAPIKSNAQIIIDTSKLSPRQLREEIFKNFEARDTKTFHIEVMSFGFKYGLPIDADIVMDVRFLPNPYYVSELRNKTGKDDAVYEYVMKSEKTEEFYQKFVSLLKYVIPGYIAEGKSNVTIAIGCTGGQHRSVALAERIGNELSKEYPVHMSHRDMNKRKETVNRS</sequence>
<proteinExistence type="inferred from homology"/>
<reference key="1">
    <citation type="journal article" date="2006" name="Proc. Natl. Acad. Sci. U.S.A.">
        <title>Multireplicon genome architecture of Lactobacillus salivarius.</title>
        <authorList>
            <person name="Claesson M.J."/>
            <person name="Li Y."/>
            <person name="Leahy S."/>
            <person name="Canchaya C."/>
            <person name="van Pijkeren J.P."/>
            <person name="Cerdeno-Tarraga A.M."/>
            <person name="Parkhill J."/>
            <person name="Flynn S."/>
            <person name="O'Sullivan G.C."/>
            <person name="Collins J.K."/>
            <person name="Higgins D."/>
            <person name="Shanahan F."/>
            <person name="Fitzgerald G.F."/>
            <person name="van Sinderen D."/>
            <person name="O'Toole P.W."/>
        </authorList>
    </citation>
    <scope>NUCLEOTIDE SEQUENCE [LARGE SCALE GENOMIC DNA]</scope>
    <source>
        <strain>UCC118</strain>
    </source>
</reference>
<feature type="chain" id="PRO_0000258970" description="Nucleotide-binding protein LSL_1171">
    <location>
        <begin position="1"/>
        <end position="295"/>
    </location>
</feature>
<feature type="binding site" evidence="1">
    <location>
        <begin position="13"/>
        <end position="20"/>
    </location>
    <ligand>
        <name>ATP</name>
        <dbReference type="ChEBI" id="CHEBI:30616"/>
    </ligand>
</feature>
<feature type="binding site" evidence="1">
    <location>
        <begin position="63"/>
        <end position="66"/>
    </location>
    <ligand>
        <name>GTP</name>
        <dbReference type="ChEBI" id="CHEBI:37565"/>
    </ligand>
</feature>
<organism>
    <name type="scientific">Ligilactobacillus salivarius (strain UCC118)</name>
    <name type="common">Lactobacillus salivarius</name>
    <dbReference type="NCBI Taxonomy" id="362948"/>
    <lineage>
        <taxon>Bacteria</taxon>
        <taxon>Bacillati</taxon>
        <taxon>Bacillota</taxon>
        <taxon>Bacilli</taxon>
        <taxon>Lactobacillales</taxon>
        <taxon>Lactobacillaceae</taxon>
        <taxon>Ligilactobacillus</taxon>
    </lineage>
</organism>
<keyword id="KW-0067">ATP-binding</keyword>
<keyword id="KW-0342">GTP-binding</keyword>
<keyword id="KW-0547">Nucleotide-binding</keyword>
<keyword id="KW-1185">Reference proteome</keyword>
<accession>Q1WT77</accession>